<protein>
    <recommendedName>
        <fullName evidence="1">UDP-3-O-acyl-N-acetylglucosamine deacetylase</fullName>
        <shortName evidence="1">UDP-3-O-acyl-GlcNAc deacetylase</shortName>
        <ecNumber evidence="1">3.5.1.108</ecNumber>
    </recommendedName>
    <alternativeName>
        <fullName evidence="1">UDP-3-O-[R-3-hydroxymyristoyl]-N-acetylglucosamine deacetylase</fullName>
    </alternativeName>
</protein>
<comment type="function">
    <text evidence="1">Catalyzes the hydrolysis of UDP-3-O-myristoyl-N-acetylglucosamine to form UDP-3-O-myristoylglucosamine and acetate, the committed step in lipid A biosynthesis.</text>
</comment>
<comment type="catalytic activity">
    <reaction evidence="1">
        <text>a UDP-3-O-[(3R)-3-hydroxyacyl]-N-acetyl-alpha-D-glucosamine + H2O = a UDP-3-O-[(3R)-3-hydroxyacyl]-alpha-D-glucosamine + acetate</text>
        <dbReference type="Rhea" id="RHEA:67816"/>
        <dbReference type="ChEBI" id="CHEBI:15377"/>
        <dbReference type="ChEBI" id="CHEBI:30089"/>
        <dbReference type="ChEBI" id="CHEBI:137740"/>
        <dbReference type="ChEBI" id="CHEBI:173225"/>
        <dbReference type="EC" id="3.5.1.108"/>
    </reaction>
</comment>
<comment type="cofactor">
    <cofactor evidence="1">
        <name>Zn(2+)</name>
        <dbReference type="ChEBI" id="CHEBI:29105"/>
    </cofactor>
</comment>
<comment type="pathway">
    <text evidence="1">Glycolipid biosynthesis; lipid IV(A) biosynthesis; lipid IV(A) from (3R)-3-hydroxytetradecanoyl-[acyl-carrier-protein] and UDP-N-acetyl-alpha-D-glucosamine: step 2/6.</text>
</comment>
<comment type="similarity">
    <text evidence="1">Belongs to the LpxC family.</text>
</comment>
<sequence>MKQRTIKRPVEAIGIGLHKGVPVKLRLEPMAEDSGIVFYRSDKGVSIPLSPDYVVDTKMATVIGNEGVMVSTIEHLMSAIYAFGIDNLRIIVDNDEVPIMDGSAISFVMMIEEAGIKELEAPKKFIKITKEVEIKDGDKFAKLKPNEKISFDFEINFDHPVIGNQKYMFNFSTKNYIEEIARARTFGFLKEVQYLRSIGLALGGSLENAIVLDDKKILNDSLRFEDEFVRHKILDAIGDMSLLGGNFIGSYEAFASGHHLNHLLTKELVAQEAFEIVTFEKEGEKAVAKAFS</sequence>
<feature type="chain" id="PRO_1000134400" description="UDP-3-O-acyl-N-acetylglucosamine deacetylase">
    <location>
        <begin position="1"/>
        <end position="292"/>
    </location>
</feature>
<feature type="active site" description="Proton donor" evidence="1">
    <location>
        <position position="258"/>
    </location>
</feature>
<feature type="binding site" evidence="1">
    <location>
        <position position="75"/>
    </location>
    <ligand>
        <name>Zn(2+)</name>
        <dbReference type="ChEBI" id="CHEBI:29105"/>
    </ligand>
</feature>
<feature type="binding site" evidence="1">
    <location>
        <position position="231"/>
    </location>
    <ligand>
        <name>Zn(2+)</name>
        <dbReference type="ChEBI" id="CHEBI:29105"/>
    </ligand>
</feature>
<feature type="binding site" evidence="1">
    <location>
        <position position="235"/>
    </location>
    <ligand>
        <name>Zn(2+)</name>
        <dbReference type="ChEBI" id="CHEBI:29105"/>
    </ligand>
</feature>
<name>LPXC_NAUPA</name>
<organism>
    <name type="scientific">Nautilia profundicola (strain ATCC BAA-1463 / DSM 18972 / AmH)</name>
    <dbReference type="NCBI Taxonomy" id="598659"/>
    <lineage>
        <taxon>Bacteria</taxon>
        <taxon>Pseudomonadati</taxon>
        <taxon>Campylobacterota</taxon>
        <taxon>Epsilonproteobacteria</taxon>
        <taxon>Nautiliales</taxon>
        <taxon>Nautiliaceae</taxon>
        <taxon>Nautilia</taxon>
    </lineage>
</organism>
<gene>
    <name evidence="1" type="primary">lpxC</name>
    <name type="ordered locus">NAMH_1547</name>
</gene>
<reference key="1">
    <citation type="journal article" date="2009" name="PLoS Genet.">
        <title>Adaptations to submarine hydrothermal environments exemplified by the genome of Nautilia profundicola.</title>
        <authorList>
            <person name="Campbell B.J."/>
            <person name="Smith J.L."/>
            <person name="Hanson T.E."/>
            <person name="Klotz M.G."/>
            <person name="Stein L.Y."/>
            <person name="Lee C.K."/>
            <person name="Wu D."/>
            <person name="Robinson J.M."/>
            <person name="Khouri H.M."/>
            <person name="Eisen J.A."/>
            <person name="Cary S.C."/>
        </authorList>
    </citation>
    <scope>NUCLEOTIDE SEQUENCE [LARGE SCALE GENOMIC DNA]</scope>
    <source>
        <strain>ATCC BAA-1463 / DSM 18972 / AmH</strain>
    </source>
</reference>
<evidence type="ECO:0000255" key="1">
    <source>
        <dbReference type="HAMAP-Rule" id="MF_00388"/>
    </source>
</evidence>
<dbReference type="EC" id="3.5.1.108" evidence="1"/>
<dbReference type="EMBL" id="CP001279">
    <property type="protein sequence ID" value="ACM93435.1"/>
    <property type="molecule type" value="Genomic_DNA"/>
</dbReference>
<dbReference type="RefSeq" id="WP_015902487.1">
    <property type="nucleotide sequence ID" value="NC_012115.1"/>
</dbReference>
<dbReference type="SMR" id="B9L6E8"/>
<dbReference type="STRING" id="598659.NAMH_1547"/>
<dbReference type="KEGG" id="nam:NAMH_1547"/>
<dbReference type="eggNOG" id="COG0774">
    <property type="taxonomic scope" value="Bacteria"/>
</dbReference>
<dbReference type="HOGENOM" id="CLU_046528_1_0_7"/>
<dbReference type="OrthoDB" id="9802746at2"/>
<dbReference type="UniPathway" id="UPA00359">
    <property type="reaction ID" value="UER00478"/>
</dbReference>
<dbReference type="Proteomes" id="UP000000448">
    <property type="component" value="Chromosome"/>
</dbReference>
<dbReference type="GO" id="GO:0016020">
    <property type="term" value="C:membrane"/>
    <property type="evidence" value="ECO:0007669"/>
    <property type="project" value="GOC"/>
</dbReference>
<dbReference type="GO" id="GO:0046872">
    <property type="term" value="F:metal ion binding"/>
    <property type="evidence" value="ECO:0007669"/>
    <property type="project" value="UniProtKB-KW"/>
</dbReference>
<dbReference type="GO" id="GO:0103117">
    <property type="term" value="F:UDP-3-O-acyl-N-acetylglucosamine deacetylase activity"/>
    <property type="evidence" value="ECO:0007669"/>
    <property type="project" value="UniProtKB-UniRule"/>
</dbReference>
<dbReference type="GO" id="GO:0009245">
    <property type="term" value="P:lipid A biosynthetic process"/>
    <property type="evidence" value="ECO:0007669"/>
    <property type="project" value="UniProtKB-UniRule"/>
</dbReference>
<dbReference type="Gene3D" id="3.30.230.20">
    <property type="entry name" value="lpxc deacetylase, domain 1"/>
    <property type="match status" value="1"/>
</dbReference>
<dbReference type="Gene3D" id="3.30.1700.10">
    <property type="entry name" value="lpxc deacetylase, domain 2"/>
    <property type="match status" value="1"/>
</dbReference>
<dbReference type="HAMAP" id="MF_00388">
    <property type="entry name" value="LpxC"/>
    <property type="match status" value="1"/>
</dbReference>
<dbReference type="InterPro" id="IPR020568">
    <property type="entry name" value="Ribosomal_Su5_D2-typ_SF"/>
</dbReference>
<dbReference type="InterPro" id="IPR004463">
    <property type="entry name" value="UDP-acyl_GlcNac_deAcase"/>
</dbReference>
<dbReference type="InterPro" id="IPR011334">
    <property type="entry name" value="UDP-acyl_GlcNac_deAcase_C"/>
</dbReference>
<dbReference type="InterPro" id="IPR015870">
    <property type="entry name" value="UDP-acyl_N-AcGlcN_deAcase_N"/>
</dbReference>
<dbReference type="NCBIfam" id="TIGR00325">
    <property type="entry name" value="lpxC"/>
    <property type="match status" value="1"/>
</dbReference>
<dbReference type="PANTHER" id="PTHR33694">
    <property type="entry name" value="UDP-3-O-ACYL-N-ACETYLGLUCOSAMINE DEACETYLASE 1, MITOCHONDRIAL-RELATED"/>
    <property type="match status" value="1"/>
</dbReference>
<dbReference type="PANTHER" id="PTHR33694:SF1">
    <property type="entry name" value="UDP-3-O-ACYL-N-ACETYLGLUCOSAMINE DEACETYLASE 1, MITOCHONDRIAL-RELATED"/>
    <property type="match status" value="1"/>
</dbReference>
<dbReference type="Pfam" id="PF03331">
    <property type="entry name" value="LpxC"/>
    <property type="match status" value="1"/>
</dbReference>
<dbReference type="SUPFAM" id="SSF54211">
    <property type="entry name" value="Ribosomal protein S5 domain 2-like"/>
    <property type="match status" value="2"/>
</dbReference>
<proteinExistence type="inferred from homology"/>
<accession>B9L6E8</accession>
<keyword id="KW-0378">Hydrolase</keyword>
<keyword id="KW-0441">Lipid A biosynthesis</keyword>
<keyword id="KW-0444">Lipid biosynthesis</keyword>
<keyword id="KW-0443">Lipid metabolism</keyword>
<keyword id="KW-0479">Metal-binding</keyword>
<keyword id="KW-0862">Zinc</keyword>